<evidence type="ECO:0000255" key="1">
    <source>
        <dbReference type="HAMAP-Rule" id="MF_00534"/>
    </source>
</evidence>
<accession>Q8DG51</accession>
<comment type="catalytic activity">
    <reaction evidence="1">
        <text>tRNA(Asn) + L-asparagine + ATP = L-asparaginyl-tRNA(Asn) + AMP + diphosphate + H(+)</text>
        <dbReference type="Rhea" id="RHEA:11180"/>
        <dbReference type="Rhea" id="RHEA-COMP:9659"/>
        <dbReference type="Rhea" id="RHEA-COMP:9674"/>
        <dbReference type="ChEBI" id="CHEBI:15378"/>
        <dbReference type="ChEBI" id="CHEBI:30616"/>
        <dbReference type="ChEBI" id="CHEBI:33019"/>
        <dbReference type="ChEBI" id="CHEBI:58048"/>
        <dbReference type="ChEBI" id="CHEBI:78442"/>
        <dbReference type="ChEBI" id="CHEBI:78515"/>
        <dbReference type="ChEBI" id="CHEBI:456215"/>
        <dbReference type="EC" id="6.1.1.22"/>
    </reaction>
</comment>
<comment type="subunit">
    <text evidence="1">Homodimer.</text>
</comment>
<comment type="subcellular location">
    <subcellularLocation>
        <location evidence="1">Cytoplasm</location>
    </subcellularLocation>
</comment>
<comment type="similarity">
    <text evidence="1">Belongs to the class-II aminoacyl-tRNA synthetase family.</text>
</comment>
<protein>
    <recommendedName>
        <fullName evidence="1">Asparagine--tRNA ligase</fullName>
        <ecNumber evidence="1">6.1.1.22</ecNumber>
    </recommendedName>
    <alternativeName>
        <fullName evidence="1">Asparaginyl-tRNA synthetase</fullName>
        <shortName evidence="1">AsnRS</shortName>
    </alternativeName>
</protein>
<feature type="chain" id="PRO_0000176467" description="Asparagine--tRNA ligase">
    <location>
        <begin position="1"/>
        <end position="462"/>
    </location>
</feature>
<dbReference type="EC" id="6.1.1.22" evidence="1"/>
<dbReference type="EMBL" id="BA000039">
    <property type="protein sequence ID" value="BAC10024.1"/>
    <property type="molecule type" value="Genomic_DNA"/>
</dbReference>
<dbReference type="RefSeq" id="NP_683262.1">
    <property type="nucleotide sequence ID" value="NC_004113.1"/>
</dbReference>
<dbReference type="RefSeq" id="WP_011058304.1">
    <property type="nucleotide sequence ID" value="NC_004113.1"/>
</dbReference>
<dbReference type="SMR" id="Q8DG51"/>
<dbReference type="STRING" id="197221.gene:10749094"/>
<dbReference type="EnsemblBacteria" id="BAC10024">
    <property type="protein sequence ID" value="BAC10024"/>
    <property type="gene ID" value="BAC10024"/>
</dbReference>
<dbReference type="KEGG" id="tel:tlr2473"/>
<dbReference type="PATRIC" id="fig|197221.4.peg.2598"/>
<dbReference type="eggNOG" id="COG0017">
    <property type="taxonomic scope" value="Bacteria"/>
</dbReference>
<dbReference type="Proteomes" id="UP000000440">
    <property type="component" value="Chromosome"/>
</dbReference>
<dbReference type="GO" id="GO:0005737">
    <property type="term" value="C:cytoplasm"/>
    <property type="evidence" value="ECO:0007669"/>
    <property type="project" value="UniProtKB-SubCell"/>
</dbReference>
<dbReference type="GO" id="GO:0004816">
    <property type="term" value="F:asparagine-tRNA ligase activity"/>
    <property type="evidence" value="ECO:0007669"/>
    <property type="project" value="UniProtKB-UniRule"/>
</dbReference>
<dbReference type="GO" id="GO:0005524">
    <property type="term" value="F:ATP binding"/>
    <property type="evidence" value="ECO:0007669"/>
    <property type="project" value="UniProtKB-UniRule"/>
</dbReference>
<dbReference type="GO" id="GO:0003676">
    <property type="term" value="F:nucleic acid binding"/>
    <property type="evidence" value="ECO:0007669"/>
    <property type="project" value="InterPro"/>
</dbReference>
<dbReference type="GO" id="GO:0006421">
    <property type="term" value="P:asparaginyl-tRNA aminoacylation"/>
    <property type="evidence" value="ECO:0007669"/>
    <property type="project" value="UniProtKB-UniRule"/>
</dbReference>
<dbReference type="CDD" id="cd00776">
    <property type="entry name" value="AsxRS_core"/>
    <property type="match status" value="1"/>
</dbReference>
<dbReference type="CDD" id="cd04318">
    <property type="entry name" value="EcAsnRS_like_N"/>
    <property type="match status" value="1"/>
</dbReference>
<dbReference type="FunFam" id="3.30.930.10:FF:000016">
    <property type="entry name" value="Asparagine--tRNA ligase"/>
    <property type="match status" value="1"/>
</dbReference>
<dbReference type="Gene3D" id="3.30.930.10">
    <property type="entry name" value="Bira Bifunctional Protein, Domain 2"/>
    <property type="match status" value="1"/>
</dbReference>
<dbReference type="Gene3D" id="2.40.50.140">
    <property type="entry name" value="Nucleic acid-binding proteins"/>
    <property type="match status" value="1"/>
</dbReference>
<dbReference type="HAMAP" id="MF_00534">
    <property type="entry name" value="Asn_tRNA_synth"/>
    <property type="match status" value="1"/>
</dbReference>
<dbReference type="InterPro" id="IPR004364">
    <property type="entry name" value="Aa-tRNA-synt_II"/>
</dbReference>
<dbReference type="InterPro" id="IPR006195">
    <property type="entry name" value="aa-tRNA-synth_II"/>
</dbReference>
<dbReference type="InterPro" id="IPR045864">
    <property type="entry name" value="aa-tRNA-synth_II/BPL/LPL"/>
</dbReference>
<dbReference type="InterPro" id="IPR004522">
    <property type="entry name" value="Asn-tRNA-ligase"/>
</dbReference>
<dbReference type="InterPro" id="IPR002312">
    <property type="entry name" value="Asp/Asn-tRNA-synth_IIb"/>
</dbReference>
<dbReference type="InterPro" id="IPR012340">
    <property type="entry name" value="NA-bd_OB-fold"/>
</dbReference>
<dbReference type="InterPro" id="IPR004365">
    <property type="entry name" value="NA-bd_OB_tRNA"/>
</dbReference>
<dbReference type="NCBIfam" id="TIGR00457">
    <property type="entry name" value="asnS"/>
    <property type="match status" value="1"/>
</dbReference>
<dbReference type="NCBIfam" id="NF003037">
    <property type="entry name" value="PRK03932.1"/>
    <property type="match status" value="1"/>
</dbReference>
<dbReference type="PANTHER" id="PTHR22594:SF34">
    <property type="entry name" value="ASPARAGINE--TRNA LIGASE, MITOCHONDRIAL-RELATED"/>
    <property type="match status" value="1"/>
</dbReference>
<dbReference type="PANTHER" id="PTHR22594">
    <property type="entry name" value="ASPARTYL/LYSYL-TRNA SYNTHETASE"/>
    <property type="match status" value="1"/>
</dbReference>
<dbReference type="Pfam" id="PF00152">
    <property type="entry name" value="tRNA-synt_2"/>
    <property type="match status" value="1"/>
</dbReference>
<dbReference type="Pfam" id="PF01336">
    <property type="entry name" value="tRNA_anti-codon"/>
    <property type="match status" value="1"/>
</dbReference>
<dbReference type="PRINTS" id="PR01042">
    <property type="entry name" value="TRNASYNTHASP"/>
</dbReference>
<dbReference type="SUPFAM" id="SSF55681">
    <property type="entry name" value="Class II aaRS and biotin synthetases"/>
    <property type="match status" value="1"/>
</dbReference>
<dbReference type="SUPFAM" id="SSF50249">
    <property type="entry name" value="Nucleic acid-binding proteins"/>
    <property type="match status" value="1"/>
</dbReference>
<dbReference type="PROSITE" id="PS50862">
    <property type="entry name" value="AA_TRNA_LIGASE_II"/>
    <property type="match status" value="1"/>
</dbReference>
<name>SYN_THEVB</name>
<organism>
    <name type="scientific">Thermosynechococcus vestitus (strain NIES-2133 / IAM M-273 / BP-1)</name>
    <dbReference type="NCBI Taxonomy" id="197221"/>
    <lineage>
        <taxon>Bacteria</taxon>
        <taxon>Bacillati</taxon>
        <taxon>Cyanobacteriota</taxon>
        <taxon>Cyanophyceae</taxon>
        <taxon>Acaryochloridales</taxon>
        <taxon>Thermosynechococcaceae</taxon>
        <taxon>Thermosynechococcus</taxon>
    </lineage>
</organism>
<sequence>MQQRIKDILHQGQVGDRITVKGWVRTKRELKECTFVNLNDGSTLAGLQVVIPNTVAAATPTMKDLTTGAAAEFTGELVRSPGKNQAIELHAEEIHLWGTADPETYPLQKKRHSFEFLRTIAHLRPRTNTLGAVMRVRNACATAIHQFFQERGFLWVHTPIITASDCEGAGELFTVTTLDLTQPPKTPEGKIDFSQDFFGRRAYLTVSGQLEAEIMATAFTNVYTFGPTFRAENSNTSRHLAEFWMVEPEMAFCDLRGDMELAEAFLQFVFRYVLDHCPEDMAFFQERIDHSVMATAEQMATQPFAHLSYSEAIQVLEKSGRAFEFPVAWGLDLQSEHERYLAEEYCQRPVIVYDYPAAIKAFYMRLNDDGKTVAAMDILAPKIGEIIGGSQREERFDVLQERIVTQGLDPAPYWWYLDLRRYGSVPHAGFGLGFERLVQFMTGMDNIRDVIPFPRTPGNAEF</sequence>
<keyword id="KW-0030">Aminoacyl-tRNA synthetase</keyword>
<keyword id="KW-0067">ATP-binding</keyword>
<keyword id="KW-0963">Cytoplasm</keyword>
<keyword id="KW-0436">Ligase</keyword>
<keyword id="KW-0547">Nucleotide-binding</keyword>
<keyword id="KW-0648">Protein biosynthesis</keyword>
<keyword id="KW-1185">Reference proteome</keyword>
<gene>
    <name evidence="1" type="primary">asnS</name>
    <name type="ordered locus">tlr2473</name>
</gene>
<reference key="1">
    <citation type="journal article" date="2002" name="DNA Res.">
        <title>Complete genome structure of the thermophilic cyanobacterium Thermosynechococcus elongatus BP-1.</title>
        <authorList>
            <person name="Nakamura Y."/>
            <person name="Kaneko T."/>
            <person name="Sato S."/>
            <person name="Ikeuchi M."/>
            <person name="Katoh H."/>
            <person name="Sasamoto S."/>
            <person name="Watanabe A."/>
            <person name="Iriguchi M."/>
            <person name="Kawashima K."/>
            <person name="Kimura T."/>
            <person name="Kishida Y."/>
            <person name="Kiyokawa C."/>
            <person name="Kohara M."/>
            <person name="Matsumoto M."/>
            <person name="Matsuno A."/>
            <person name="Nakazaki N."/>
            <person name="Shimpo S."/>
            <person name="Sugimoto M."/>
            <person name="Takeuchi C."/>
            <person name="Yamada M."/>
            <person name="Tabata S."/>
        </authorList>
    </citation>
    <scope>NUCLEOTIDE SEQUENCE [LARGE SCALE GENOMIC DNA]</scope>
    <source>
        <strain>NIES-2133 / IAM M-273 / BP-1</strain>
    </source>
</reference>
<proteinExistence type="inferred from homology"/>